<gene>
    <name evidence="1" type="primary">sfsA</name>
    <name type="ordered locus">tlr1697</name>
</gene>
<dbReference type="EMBL" id="BA000039">
    <property type="protein sequence ID" value="BAC09249.1"/>
    <property type="molecule type" value="Genomic_DNA"/>
</dbReference>
<dbReference type="RefSeq" id="NP_682487.1">
    <property type="nucleotide sequence ID" value="NC_004113.1"/>
</dbReference>
<dbReference type="RefSeq" id="WP_011057534.1">
    <property type="nucleotide sequence ID" value="NC_004113.1"/>
</dbReference>
<dbReference type="SMR" id="Q8DI93"/>
<dbReference type="STRING" id="197221.gene:10748301"/>
<dbReference type="EnsemblBacteria" id="BAC09249">
    <property type="protein sequence ID" value="BAC09249"/>
    <property type="gene ID" value="BAC09249"/>
</dbReference>
<dbReference type="KEGG" id="tel:tlr1697"/>
<dbReference type="PATRIC" id="fig|197221.4.peg.1778"/>
<dbReference type="eggNOG" id="COG1489">
    <property type="taxonomic scope" value="Bacteria"/>
</dbReference>
<dbReference type="Proteomes" id="UP000000440">
    <property type="component" value="Chromosome"/>
</dbReference>
<dbReference type="GO" id="GO:0003677">
    <property type="term" value="F:DNA binding"/>
    <property type="evidence" value="ECO:0007669"/>
    <property type="project" value="InterPro"/>
</dbReference>
<dbReference type="CDD" id="cd22359">
    <property type="entry name" value="SfsA-like_bacterial"/>
    <property type="match status" value="1"/>
</dbReference>
<dbReference type="Gene3D" id="2.40.50.580">
    <property type="match status" value="1"/>
</dbReference>
<dbReference type="Gene3D" id="3.40.1350.60">
    <property type="match status" value="1"/>
</dbReference>
<dbReference type="HAMAP" id="MF_00095">
    <property type="entry name" value="SfsA"/>
    <property type="match status" value="1"/>
</dbReference>
<dbReference type="InterPro" id="IPR005224">
    <property type="entry name" value="SfsA"/>
</dbReference>
<dbReference type="InterPro" id="IPR040452">
    <property type="entry name" value="SfsA_C"/>
</dbReference>
<dbReference type="InterPro" id="IPR041465">
    <property type="entry name" value="SfsA_N"/>
</dbReference>
<dbReference type="NCBIfam" id="TIGR00230">
    <property type="entry name" value="sfsA"/>
    <property type="match status" value="1"/>
</dbReference>
<dbReference type="PANTHER" id="PTHR30545">
    <property type="entry name" value="SUGAR FERMENTATION STIMULATION PROTEIN A"/>
    <property type="match status" value="1"/>
</dbReference>
<dbReference type="PANTHER" id="PTHR30545:SF2">
    <property type="entry name" value="SUGAR FERMENTATION STIMULATION PROTEIN A"/>
    <property type="match status" value="1"/>
</dbReference>
<dbReference type="Pfam" id="PF03749">
    <property type="entry name" value="SfsA"/>
    <property type="match status" value="1"/>
</dbReference>
<dbReference type="Pfam" id="PF17746">
    <property type="entry name" value="SfsA_N"/>
    <property type="match status" value="1"/>
</dbReference>
<protein>
    <recommendedName>
        <fullName evidence="1">Sugar fermentation stimulation protein homolog</fullName>
    </recommendedName>
</protein>
<keyword id="KW-1185">Reference proteome</keyword>
<proteinExistence type="inferred from homology"/>
<feature type="chain" id="PRO_0000152309" description="Sugar fermentation stimulation protein homolog">
    <location>
        <begin position="1"/>
        <end position="241"/>
    </location>
</feature>
<evidence type="ECO:0000255" key="1">
    <source>
        <dbReference type="HAMAP-Rule" id="MF_00095"/>
    </source>
</evidence>
<reference key="1">
    <citation type="journal article" date="2002" name="DNA Res.">
        <title>Complete genome structure of the thermophilic cyanobacterium Thermosynechococcus elongatus BP-1.</title>
        <authorList>
            <person name="Nakamura Y."/>
            <person name="Kaneko T."/>
            <person name="Sato S."/>
            <person name="Ikeuchi M."/>
            <person name="Katoh H."/>
            <person name="Sasamoto S."/>
            <person name="Watanabe A."/>
            <person name="Iriguchi M."/>
            <person name="Kawashima K."/>
            <person name="Kimura T."/>
            <person name="Kishida Y."/>
            <person name="Kiyokawa C."/>
            <person name="Kohara M."/>
            <person name="Matsumoto M."/>
            <person name="Matsuno A."/>
            <person name="Nakazaki N."/>
            <person name="Shimpo S."/>
            <person name="Sugimoto M."/>
            <person name="Takeuchi C."/>
            <person name="Yamada M."/>
            <person name="Tabata S."/>
        </authorList>
    </citation>
    <scope>NUCLEOTIDE SEQUENCE [LARGE SCALE GENOMIC DNA]</scope>
    <source>
        <strain>NIES-2133 / IAM M-273 / BP-1</strain>
    </source>
</reference>
<organism>
    <name type="scientific">Thermosynechococcus vestitus (strain NIES-2133 / IAM M-273 / BP-1)</name>
    <dbReference type="NCBI Taxonomy" id="197221"/>
    <lineage>
        <taxon>Bacteria</taxon>
        <taxon>Bacillati</taxon>
        <taxon>Cyanobacteriota</taxon>
        <taxon>Cyanophyceae</taxon>
        <taxon>Acaryochloridales</taxon>
        <taxon>Thermosynechococcaceae</taxon>
        <taxon>Thermosynechococcus</taxon>
    </lineage>
</organism>
<sequence length="241" mass="27180">MTPPFCWYYPPLQEGILCRRYQRFFAEIELTSGDRVTAHCPNTGPMTGICQVGAPVQVSYHADPKRKLAYTWEMIFVDGTWVGVNTSLPNRVIASALAAGILPELAGYGTQQREVAYGQERSRIDFYLTDHPQEPPAYVEVKNTTWAQGGLALFPDTVTSRGQKHLRELQRLRQTQPETRVCMLYFINRGDCDRFAPGDSADPTYGQLLRAAYNQGVEILPYRFAIEPRGIQFLGTAKLLL</sequence>
<name>SFSA_THEVB</name>
<accession>Q8DI93</accession>
<comment type="similarity">
    <text evidence="1">Belongs to the SfsA family.</text>
</comment>